<gene>
    <name evidence="1" type="primary">murI</name>
    <name type="ordered locus">LIC_11039</name>
</gene>
<reference key="1">
    <citation type="journal article" date="2004" name="J. Bacteriol.">
        <title>Comparative genomics of two Leptospira interrogans serovars reveals novel insights into physiology and pathogenesis.</title>
        <authorList>
            <person name="Nascimento A.L.T.O."/>
            <person name="Ko A.I."/>
            <person name="Martins E.A.L."/>
            <person name="Monteiro-Vitorello C.B."/>
            <person name="Ho P.L."/>
            <person name="Haake D.A."/>
            <person name="Verjovski-Almeida S."/>
            <person name="Hartskeerl R.A."/>
            <person name="Marques M.V."/>
            <person name="Oliveira M.C."/>
            <person name="Menck C.F.M."/>
            <person name="Leite L.C.C."/>
            <person name="Carrer H."/>
            <person name="Coutinho L.L."/>
            <person name="Degrave W.M."/>
            <person name="Dellagostin O.A."/>
            <person name="El-Dorry H."/>
            <person name="Ferro E.S."/>
            <person name="Ferro M.I.T."/>
            <person name="Furlan L.R."/>
            <person name="Gamberini M."/>
            <person name="Giglioti E.A."/>
            <person name="Goes-Neto A."/>
            <person name="Goldman G.H."/>
            <person name="Goldman M.H.S."/>
            <person name="Harakava R."/>
            <person name="Jeronimo S.M.B."/>
            <person name="Junqueira-de-Azevedo I.L.M."/>
            <person name="Kimura E.T."/>
            <person name="Kuramae E.E."/>
            <person name="Lemos E.G.M."/>
            <person name="Lemos M.V.F."/>
            <person name="Marino C.L."/>
            <person name="Nunes L.R."/>
            <person name="de Oliveira R.C."/>
            <person name="Pereira G.G."/>
            <person name="Reis M.S."/>
            <person name="Schriefer A."/>
            <person name="Siqueira W.J."/>
            <person name="Sommer P."/>
            <person name="Tsai S.M."/>
            <person name="Simpson A.J.G."/>
            <person name="Ferro J.A."/>
            <person name="Camargo L.E.A."/>
            <person name="Kitajima J.P."/>
            <person name="Setubal J.C."/>
            <person name="Van Sluys M.A."/>
        </authorList>
    </citation>
    <scope>NUCLEOTIDE SEQUENCE [LARGE SCALE GENOMIC DNA]</scope>
    <source>
        <strain>Fiocruz L1-130</strain>
    </source>
</reference>
<accession>Q72TI2</accession>
<feature type="chain" id="PRO_0000095483" description="Glutamate racemase">
    <location>
        <begin position="1"/>
        <end position="256"/>
    </location>
</feature>
<feature type="active site" description="Proton donor/acceptor" evidence="1">
    <location>
        <position position="74"/>
    </location>
</feature>
<feature type="active site" description="Proton donor/acceptor" evidence="1">
    <location>
        <position position="182"/>
    </location>
</feature>
<feature type="binding site" evidence="1">
    <location>
        <begin position="11"/>
        <end position="12"/>
    </location>
    <ligand>
        <name>substrate</name>
    </ligand>
</feature>
<feature type="binding site" evidence="1">
    <location>
        <begin position="43"/>
        <end position="44"/>
    </location>
    <ligand>
        <name>substrate</name>
    </ligand>
</feature>
<feature type="binding site" evidence="1">
    <location>
        <begin position="75"/>
        <end position="76"/>
    </location>
    <ligand>
        <name>substrate</name>
    </ligand>
</feature>
<feature type="binding site" evidence="1">
    <location>
        <begin position="183"/>
        <end position="184"/>
    </location>
    <ligand>
        <name>substrate</name>
    </ligand>
</feature>
<keyword id="KW-0133">Cell shape</keyword>
<keyword id="KW-0961">Cell wall biogenesis/degradation</keyword>
<keyword id="KW-0413">Isomerase</keyword>
<keyword id="KW-0573">Peptidoglycan synthesis</keyword>
<comment type="function">
    <text evidence="1">Provides the (R)-glutamate required for cell wall biosynthesis.</text>
</comment>
<comment type="catalytic activity">
    <reaction evidence="1">
        <text>L-glutamate = D-glutamate</text>
        <dbReference type="Rhea" id="RHEA:12813"/>
        <dbReference type="ChEBI" id="CHEBI:29985"/>
        <dbReference type="ChEBI" id="CHEBI:29986"/>
        <dbReference type="EC" id="5.1.1.3"/>
    </reaction>
</comment>
<comment type="pathway">
    <text evidence="1">Cell wall biogenesis; peptidoglycan biosynthesis.</text>
</comment>
<comment type="similarity">
    <text evidence="1">Belongs to the aspartate/glutamate racemases family.</text>
</comment>
<sequence>MKEPLKIGLMDSGMGGLSVLKELLKYDSELEIVYYGDLKNSPYGEKDASEVLELVRSVCNFLQKENVSAILLACNTATSAAAQTLRKEFSIPIFGMEPAIKPAILQNPGKKVALLATPVTQREEKLQRLKSELKAEELVLSISCPGLAGLVDQGDFDKAEKYLRPILANLQEQDVENLVLGCTHYVFLKQIILKNFPNVKIYDGNSGTIKHLLNSLQVPRVILNGSQNNRSIYKLILNSEKEFHFRLASKLLSLKE</sequence>
<organism>
    <name type="scientific">Leptospira interrogans serogroup Icterohaemorrhagiae serovar copenhageni (strain Fiocruz L1-130)</name>
    <dbReference type="NCBI Taxonomy" id="267671"/>
    <lineage>
        <taxon>Bacteria</taxon>
        <taxon>Pseudomonadati</taxon>
        <taxon>Spirochaetota</taxon>
        <taxon>Spirochaetia</taxon>
        <taxon>Leptospirales</taxon>
        <taxon>Leptospiraceae</taxon>
        <taxon>Leptospira</taxon>
    </lineage>
</organism>
<dbReference type="EC" id="5.1.1.3" evidence="1"/>
<dbReference type="EMBL" id="AE016823">
    <property type="protein sequence ID" value="AAS69646.1"/>
    <property type="molecule type" value="Genomic_DNA"/>
</dbReference>
<dbReference type="RefSeq" id="WP_000662657.1">
    <property type="nucleotide sequence ID" value="NC_005823.1"/>
</dbReference>
<dbReference type="SMR" id="Q72TI2"/>
<dbReference type="GeneID" id="61144360"/>
<dbReference type="KEGG" id="lic:LIC_11039"/>
<dbReference type="HOGENOM" id="CLU_052344_1_0_12"/>
<dbReference type="UniPathway" id="UPA00219"/>
<dbReference type="Proteomes" id="UP000007037">
    <property type="component" value="Chromosome I"/>
</dbReference>
<dbReference type="GO" id="GO:0008881">
    <property type="term" value="F:glutamate racemase activity"/>
    <property type="evidence" value="ECO:0007669"/>
    <property type="project" value="UniProtKB-UniRule"/>
</dbReference>
<dbReference type="GO" id="GO:0071555">
    <property type="term" value="P:cell wall organization"/>
    <property type="evidence" value="ECO:0007669"/>
    <property type="project" value="UniProtKB-KW"/>
</dbReference>
<dbReference type="GO" id="GO:0009252">
    <property type="term" value="P:peptidoglycan biosynthetic process"/>
    <property type="evidence" value="ECO:0007669"/>
    <property type="project" value="UniProtKB-UniRule"/>
</dbReference>
<dbReference type="GO" id="GO:0008360">
    <property type="term" value="P:regulation of cell shape"/>
    <property type="evidence" value="ECO:0007669"/>
    <property type="project" value="UniProtKB-KW"/>
</dbReference>
<dbReference type="Gene3D" id="3.40.50.1860">
    <property type="match status" value="2"/>
</dbReference>
<dbReference type="HAMAP" id="MF_00258">
    <property type="entry name" value="Glu_racemase"/>
    <property type="match status" value="1"/>
</dbReference>
<dbReference type="InterPro" id="IPR015942">
    <property type="entry name" value="Asp/Glu/hydantoin_racemase"/>
</dbReference>
<dbReference type="InterPro" id="IPR001920">
    <property type="entry name" value="Asp/Glu_race"/>
</dbReference>
<dbReference type="InterPro" id="IPR004391">
    <property type="entry name" value="Glu_race"/>
</dbReference>
<dbReference type="NCBIfam" id="TIGR00067">
    <property type="entry name" value="glut_race"/>
    <property type="match status" value="1"/>
</dbReference>
<dbReference type="PANTHER" id="PTHR21198">
    <property type="entry name" value="GLUTAMATE RACEMASE"/>
    <property type="match status" value="1"/>
</dbReference>
<dbReference type="PANTHER" id="PTHR21198:SF3">
    <property type="entry name" value="GLUTAMATE RACEMASE"/>
    <property type="match status" value="1"/>
</dbReference>
<dbReference type="Pfam" id="PF01177">
    <property type="entry name" value="Asp_Glu_race"/>
    <property type="match status" value="1"/>
</dbReference>
<dbReference type="SUPFAM" id="SSF53681">
    <property type="entry name" value="Aspartate/glutamate racemase"/>
    <property type="match status" value="2"/>
</dbReference>
<name>MURI_LEPIC</name>
<proteinExistence type="inferred from homology"/>
<protein>
    <recommendedName>
        <fullName evidence="1">Glutamate racemase</fullName>
        <ecNumber evidence="1">5.1.1.3</ecNumber>
    </recommendedName>
</protein>
<evidence type="ECO:0000255" key="1">
    <source>
        <dbReference type="HAMAP-Rule" id="MF_00258"/>
    </source>
</evidence>